<name>PPHLN_MOUSE</name>
<organism>
    <name type="scientific">Mus musculus</name>
    <name type="common">Mouse</name>
    <dbReference type="NCBI Taxonomy" id="10090"/>
    <lineage>
        <taxon>Eukaryota</taxon>
        <taxon>Metazoa</taxon>
        <taxon>Chordata</taxon>
        <taxon>Craniata</taxon>
        <taxon>Vertebrata</taxon>
        <taxon>Euteleostomi</taxon>
        <taxon>Mammalia</taxon>
        <taxon>Eutheria</taxon>
        <taxon>Euarchontoglires</taxon>
        <taxon>Glires</taxon>
        <taxon>Rodentia</taxon>
        <taxon>Myomorpha</taxon>
        <taxon>Muroidea</taxon>
        <taxon>Muridae</taxon>
        <taxon>Murinae</taxon>
        <taxon>Mus</taxon>
        <taxon>Mus</taxon>
    </lineage>
</organism>
<sequence>MWSEGRYDYDRLPRERVPPRSHPSDGYHRVVNVVPKRPPLLDKRPPLLDKRPPLLARPDEGGYSRYYSHVDCRVCDEGRSFSHDRRSGPSHSGDESGYRWLRDDHSTSRQPDYRDMRDGFRRKSFYSSHYSRDRSPHKRDAPFFRESPVGRKDSPHSRSGSSVSSRSYSPERSRTHSFHQSQHRKSSRVGASYKRQNEAIRGRGKERSIQSVKTSRDASPSSSSAVASSKALDKPSRLTEKELAEAESKWANETLEKSDESNLAEMNEFEAGSTAPLFIDQTEEPESNTVDGTELYEDSQLSNRSKAIASKTKEIEQVYRQDCETFGMVVKMLIEKDPSLEKSVQFALRQNLHEIGERCVEELKRFITEYDNSARDFGDPF</sequence>
<keyword id="KW-0007">Acetylation</keyword>
<keyword id="KW-0025">Alternative splicing</keyword>
<keyword id="KW-0158">Chromosome</keyword>
<keyword id="KW-0963">Cytoplasm</keyword>
<keyword id="KW-1017">Isopeptide bond</keyword>
<keyword id="KW-0417">Keratinization</keyword>
<keyword id="KW-0539">Nucleus</keyword>
<keyword id="KW-0597">Phosphoprotein</keyword>
<keyword id="KW-1185">Reference proteome</keyword>
<keyword id="KW-0678">Repressor</keyword>
<keyword id="KW-0804">Transcription</keyword>
<keyword id="KW-0805">Transcription regulation</keyword>
<keyword id="KW-0832">Ubl conjugation</keyword>
<reference key="1">
    <citation type="journal article" date="2005" name="Science">
        <title>The transcriptional landscape of the mammalian genome.</title>
        <authorList>
            <person name="Carninci P."/>
            <person name="Kasukawa T."/>
            <person name="Katayama S."/>
            <person name="Gough J."/>
            <person name="Frith M.C."/>
            <person name="Maeda N."/>
            <person name="Oyama R."/>
            <person name="Ravasi T."/>
            <person name="Lenhard B."/>
            <person name="Wells C."/>
            <person name="Kodzius R."/>
            <person name="Shimokawa K."/>
            <person name="Bajic V.B."/>
            <person name="Brenner S.E."/>
            <person name="Batalov S."/>
            <person name="Forrest A.R."/>
            <person name="Zavolan M."/>
            <person name="Davis M.J."/>
            <person name="Wilming L.G."/>
            <person name="Aidinis V."/>
            <person name="Allen J.E."/>
            <person name="Ambesi-Impiombato A."/>
            <person name="Apweiler R."/>
            <person name="Aturaliya R.N."/>
            <person name="Bailey T.L."/>
            <person name="Bansal M."/>
            <person name="Baxter L."/>
            <person name="Beisel K.W."/>
            <person name="Bersano T."/>
            <person name="Bono H."/>
            <person name="Chalk A.M."/>
            <person name="Chiu K.P."/>
            <person name="Choudhary V."/>
            <person name="Christoffels A."/>
            <person name="Clutterbuck D.R."/>
            <person name="Crowe M.L."/>
            <person name="Dalla E."/>
            <person name="Dalrymple B.P."/>
            <person name="de Bono B."/>
            <person name="Della Gatta G."/>
            <person name="di Bernardo D."/>
            <person name="Down T."/>
            <person name="Engstrom P."/>
            <person name="Fagiolini M."/>
            <person name="Faulkner G."/>
            <person name="Fletcher C.F."/>
            <person name="Fukushima T."/>
            <person name="Furuno M."/>
            <person name="Futaki S."/>
            <person name="Gariboldi M."/>
            <person name="Georgii-Hemming P."/>
            <person name="Gingeras T.R."/>
            <person name="Gojobori T."/>
            <person name="Green R.E."/>
            <person name="Gustincich S."/>
            <person name="Harbers M."/>
            <person name="Hayashi Y."/>
            <person name="Hensch T.K."/>
            <person name="Hirokawa N."/>
            <person name="Hill D."/>
            <person name="Huminiecki L."/>
            <person name="Iacono M."/>
            <person name="Ikeo K."/>
            <person name="Iwama A."/>
            <person name="Ishikawa T."/>
            <person name="Jakt M."/>
            <person name="Kanapin A."/>
            <person name="Katoh M."/>
            <person name="Kawasawa Y."/>
            <person name="Kelso J."/>
            <person name="Kitamura H."/>
            <person name="Kitano H."/>
            <person name="Kollias G."/>
            <person name="Krishnan S.P."/>
            <person name="Kruger A."/>
            <person name="Kummerfeld S.K."/>
            <person name="Kurochkin I.V."/>
            <person name="Lareau L.F."/>
            <person name="Lazarevic D."/>
            <person name="Lipovich L."/>
            <person name="Liu J."/>
            <person name="Liuni S."/>
            <person name="McWilliam S."/>
            <person name="Madan Babu M."/>
            <person name="Madera M."/>
            <person name="Marchionni L."/>
            <person name="Matsuda H."/>
            <person name="Matsuzawa S."/>
            <person name="Miki H."/>
            <person name="Mignone F."/>
            <person name="Miyake S."/>
            <person name="Morris K."/>
            <person name="Mottagui-Tabar S."/>
            <person name="Mulder N."/>
            <person name="Nakano N."/>
            <person name="Nakauchi H."/>
            <person name="Ng P."/>
            <person name="Nilsson R."/>
            <person name="Nishiguchi S."/>
            <person name="Nishikawa S."/>
            <person name="Nori F."/>
            <person name="Ohara O."/>
            <person name="Okazaki Y."/>
            <person name="Orlando V."/>
            <person name="Pang K.C."/>
            <person name="Pavan W.J."/>
            <person name="Pavesi G."/>
            <person name="Pesole G."/>
            <person name="Petrovsky N."/>
            <person name="Piazza S."/>
            <person name="Reed J."/>
            <person name="Reid J.F."/>
            <person name="Ring B.Z."/>
            <person name="Ringwald M."/>
            <person name="Rost B."/>
            <person name="Ruan Y."/>
            <person name="Salzberg S.L."/>
            <person name="Sandelin A."/>
            <person name="Schneider C."/>
            <person name="Schoenbach C."/>
            <person name="Sekiguchi K."/>
            <person name="Semple C.A."/>
            <person name="Seno S."/>
            <person name="Sessa L."/>
            <person name="Sheng Y."/>
            <person name="Shibata Y."/>
            <person name="Shimada H."/>
            <person name="Shimada K."/>
            <person name="Silva D."/>
            <person name="Sinclair B."/>
            <person name="Sperling S."/>
            <person name="Stupka E."/>
            <person name="Sugiura K."/>
            <person name="Sultana R."/>
            <person name="Takenaka Y."/>
            <person name="Taki K."/>
            <person name="Tammoja K."/>
            <person name="Tan S.L."/>
            <person name="Tang S."/>
            <person name="Taylor M.S."/>
            <person name="Tegner J."/>
            <person name="Teichmann S.A."/>
            <person name="Ueda H.R."/>
            <person name="van Nimwegen E."/>
            <person name="Verardo R."/>
            <person name="Wei C.L."/>
            <person name="Yagi K."/>
            <person name="Yamanishi H."/>
            <person name="Zabarovsky E."/>
            <person name="Zhu S."/>
            <person name="Zimmer A."/>
            <person name="Hide W."/>
            <person name="Bult C."/>
            <person name="Grimmond S.M."/>
            <person name="Teasdale R.D."/>
            <person name="Liu E.T."/>
            <person name="Brusic V."/>
            <person name="Quackenbush J."/>
            <person name="Wahlestedt C."/>
            <person name="Mattick J.S."/>
            <person name="Hume D.A."/>
            <person name="Kai C."/>
            <person name="Sasaki D."/>
            <person name="Tomaru Y."/>
            <person name="Fukuda S."/>
            <person name="Kanamori-Katayama M."/>
            <person name="Suzuki M."/>
            <person name="Aoki J."/>
            <person name="Arakawa T."/>
            <person name="Iida J."/>
            <person name="Imamura K."/>
            <person name="Itoh M."/>
            <person name="Kato T."/>
            <person name="Kawaji H."/>
            <person name="Kawagashira N."/>
            <person name="Kawashima T."/>
            <person name="Kojima M."/>
            <person name="Kondo S."/>
            <person name="Konno H."/>
            <person name="Nakano K."/>
            <person name="Ninomiya N."/>
            <person name="Nishio T."/>
            <person name="Okada M."/>
            <person name="Plessy C."/>
            <person name="Shibata K."/>
            <person name="Shiraki T."/>
            <person name="Suzuki S."/>
            <person name="Tagami M."/>
            <person name="Waki K."/>
            <person name="Watahiki A."/>
            <person name="Okamura-Oho Y."/>
            <person name="Suzuki H."/>
            <person name="Kawai J."/>
            <person name="Hayashizaki Y."/>
        </authorList>
    </citation>
    <scope>NUCLEOTIDE SEQUENCE [LARGE SCALE MRNA] (ISOFORM 2)</scope>
    <source>
        <strain>C57BL/6J</strain>
        <tissue>Embryonic head</tissue>
    </source>
</reference>
<reference key="2">
    <citation type="journal article" date="2004" name="Genome Res.">
        <title>The status, quality, and expansion of the NIH full-length cDNA project: the Mammalian Gene Collection (MGC).</title>
        <authorList>
            <consortium name="The MGC Project Team"/>
        </authorList>
    </citation>
    <scope>NUCLEOTIDE SEQUENCE [LARGE SCALE MRNA] (ISOFORM 1)</scope>
    <source>
        <strain>FVB/N</strain>
        <tissue>Mammary gland</tissue>
    </source>
</reference>
<reference key="3">
    <citation type="journal article" date="2009" name="Genesis">
        <title>Periphilin is strongly expressed in the murine nervous system and is indispensable for murine development.</title>
        <authorList>
            <person name="Soehn A.S."/>
            <person name="Pham T.T."/>
            <person name="Schaeferhoff K."/>
            <person name="Floss T."/>
            <person name="Weisenhorn D.M."/>
            <person name="Wurst W."/>
            <person name="Bonin M."/>
            <person name="Riess O."/>
        </authorList>
    </citation>
    <scope>TISSUE SPECIFICITY</scope>
    <scope>DISRUPTION PHENOTYPE</scope>
</reference>
<reference key="4">
    <citation type="journal article" date="2009" name="Immunity">
        <title>The phagosomal proteome in interferon-gamma-activated macrophages.</title>
        <authorList>
            <person name="Trost M."/>
            <person name="English L."/>
            <person name="Lemieux S."/>
            <person name="Courcelles M."/>
            <person name="Desjardins M."/>
            <person name="Thibault P."/>
        </authorList>
    </citation>
    <scope>PHOSPHORYLATION [LARGE SCALE ANALYSIS] AT SER-219</scope>
    <scope>IDENTIFICATION BY MASS SPECTROMETRY [LARGE SCALE ANALYSIS]</scope>
</reference>
<reference key="5">
    <citation type="journal article" date="2010" name="Cell">
        <title>A tissue-specific atlas of mouse protein phosphorylation and expression.</title>
        <authorList>
            <person name="Huttlin E.L."/>
            <person name="Jedrychowski M.P."/>
            <person name="Elias J.E."/>
            <person name="Goswami T."/>
            <person name="Rad R."/>
            <person name="Beausoleil S.A."/>
            <person name="Villen J."/>
            <person name="Haas W."/>
            <person name="Sowa M.E."/>
            <person name="Gygi S.P."/>
        </authorList>
    </citation>
    <scope>PHOSPHORYLATION [LARGE SCALE ANALYSIS] AT SER-219</scope>
    <scope>IDENTIFICATION BY MASS SPECTROMETRY [LARGE SCALE ANALYSIS]</scope>
    <source>
        <tissue>Brain</tissue>
        <tissue>Kidney</tissue>
        <tissue>Liver</tissue>
        <tissue>Lung</tissue>
        <tissue>Pancreas</tissue>
        <tissue>Spleen</tissue>
        <tissue>Testis</tissue>
    </source>
</reference>
<accession>Q8K2H1</accession>
<accession>Q8BUZ6</accession>
<gene>
    <name evidence="7" type="primary">Pphln1</name>
</gene>
<comment type="function">
    <text evidence="2">Component of the HUSH complex, a multiprotein complex that mediates epigenetic repression. The HUSH complex is recruited to genomic loci rich in H3K9me3 and is probably required to maintain transcriptional silencing by promoting recruitment of SETDB1, a histone methyltransferase that mediates further deposition of H3K9me3. In the HUSH complex, contributes to the maintenance of the complex at chromatin. Acts as a transcriptional corepressor and regulates the cell cycle, probably via the HUSH complex. The HUSH complex is also involved in the silencing of unintegrated retroviral DNA: some part of the retroviral DNA formed immediately after infection remains unintegrated in the host genome and is transcriptionally repressed. May be involved in epithelial differentiation by contributing to epidermal integrity and barrier formation.</text>
</comment>
<comment type="subunit">
    <text evidence="2">Homodimer (By similarity). Component of the HUSH complex; at least composed of TASOR, PPHLN1 and MPHOSPH8 (By similarity). Interacts with SIN3A and HDAC1 (By similarity). May interact with PPL (By similarity).</text>
</comment>
<comment type="subcellular location">
    <subcellularLocation>
        <location evidence="2">Nucleus</location>
    </subcellularLocation>
    <subcellularLocation>
        <location evidence="2">Cytoplasm</location>
    </subcellularLocation>
    <subcellularLocation>
        <location evidence="2">Chromosome</location>
    </subcellularLocation>
    <text evidence="2">In undifferentiated keratinocytes expressed in speckle-type nuclear granules and at the nuclear membrane, but in the differentiated keratinocytes colocalized with periplakin at the cell periphery and at cell-cell junctions. Localizes to chromatin.</text>
</comment>
<comment type="alternative products">
    <event type="alternative splicing"/>
    <isoform>
        <id>Q8K2H1-1</id>
        <name>1</name>
        <sequence type="displayed"/>
    </isoform>
    <isoform>
        <id>Q8K2H1-2</id>
        <name>2</name>
        <sequence type="described" ref="VSP_009908"/>
    </isoform>
</comment>
<comment type="tissue specificity">
    <text evidence="4">Ubiquitously expressed. Strong expression in the developing somites and limbs, the embryonic nervous system and the adult brain.</text>
</comment>
<comment type="disruption phenotype">
    <text evidence="4">Embryonic lethality. Embryos die during early embryogenesis.</text>
</comment>
<proteinExistence type="evidence at protein level"/>
<protein>
    <recommendedName>
        <fullName evidence="2">Periphilin-1</fullName>
    </recommendedName>
</protein>
<dbReference type="EMBL" id="AK081606">
    <property type="protein sequence ID" value="BAC38270.1"/>
    <property type="molecule type" value="mRNA"/>
</dbReference>
<dbReference type="EMBL" id="BC031486">
    <property type="protein sequence ID" value="AAH31486.3"/>
    <property type="molecule type" value="mRNA"/>
</dbReference>
<dbReference type="CCDS" id="CCDS27767.1">
    <molecule id="Q8K2H1-1"/>
</dbReference>
<dbReference type="CCDS" id="CCDS27768.1">
    <molecule id="Q8K2H1-2"/>
</dbReference>
<dbReference type="RefSeq" id="NP_780572.1">
    <property type="nucleotide sequence ID" value="NM_175363.4"/>
</dbReference>
<dbReference type="RefSeq" id="XP_006520920.1">
    <property type="nucleotide sequence ID" value="XM_006520857.1"/>
</dbReference>
<dbReference type="SMR" id="Q8K2H1"/>
<dbReference type="BioGRID" id="230202">
    <property type="interactions" value="8"/>
</dbReference>
<dbReference type="FunCoup" id="Q8K2H1">
    <property type="interactions" value="4346"/>
</dbReference>
<dbReference type="IntAct" id="Q8K2H1">
    <property type="interactions" value="1"/>
</dbReference>
<dbReference type="STRING" id="10090.ENSMUSP00000042762"/>
<dbReference type="iPTMnet" id="Q8K2H1"/>
<dbReference type="PhosphoSitePlus" id="Q8K2H1"/>
<dbReference type="jPOST" id="Q8K2H1"/>
<dbReference type="PaxDb" id="10090-ENSMUSP00000042762"/>
<dbReference type="PeptideAtlas" id="Q8K2H1"/>
<dbReference type="ProteomicsDB" id="291782">
    <molecule id="Q8K2H1-1"/>
</dbReference>
<dbReference type="ProteomicsDB" id="291783">
    <molecule id="Q8K2H1-2"/>
</dbReference>
<dbReference type="Pumba" id="Q8K2H1"/>
<dbReference type="DNASU" id="223828"/>
<dbReference type="GeneID" id="223828"/>
<dbReference type="KEGG" id="mmu:223828"/>
<dbReference type="AGR" id="MGI:1917029"/>
<dbReference type="CTD" id="51535"/>
<dbReference type="MGI" id="MGI:1917029">
    <property type="gene designation" value="Pphln1"/>
</dbReference>
<dbReference type="eggNOG" id="ENOG502QW3I">
    <property type="taxonomic scope" value="Eukaryota"/>
</dbReference>
<dbReference type="InParanoid" id="Q8K2H1"/>
<dbReference type="OrthoDB" id="8933311at2759"/>
<dbReference type="PhylomeDB" id="Q8K2H1"/>
<dbReference type="BioGRID-ORCS" id="223828">
    <property type="hits" value="10 hits in 77 CRISPR screens"/>
</dbReference>
<dbReference type="ChiTaRS" id="Pphln1">
    <property type="organism name" value="mouse"/>
</dbReference>
<dbReference type="PRO" id="PR:Q8K2H1"/>
<dbReference type="Proteomes" id="UP000000589">
    <property type="component" value="Unplaced"/>
</dbReference>
<dbReference type="RNAct" id="Q8K2H1">
    <property type="molecule type" value="protein"/>
</dbReference>
<dbReference type="GO" id="GO:0005694">
    <property type="term" value="C:chromosome"/>
    <property type="evidence" value="ECO:0007669"/>
    <property type="project" value="UniProtKB-SubCell"/>
</dbReference>
<dbReference type="GO" id="GO:0005737">
    <property type="term" value="C:cytoplasm"/>
    <property type="evidence" value="ECO:0007669"/>
    <property type="project" value="UniProtKB-SubCell"/>
</dbReference>
<dbReference type="GO" id="GO:0005654">
    <property type="term" value="C:nucleoplasm"/>
    <property type="evidence" value="ECO:0000304"/>
    <property type="project" value="Reactome"/>
</dbReference>
<dbReference type="GO" id="GO:0140719">
    <property type="term" value="P:constitutive heterochromatin formation"/>
    <property type="evidence" value="ECO:0000250"/>
    <property type="project" value="UniProtKB"/>
</dbReference>
<dbReference type="GO" id="GO:0031424">
    <property type="term" value="P:keratinization"/>
    <property type="evidence" value="ECO:0007669"/>
    <property type="project" value="UniProtKB-KW"/>
</dbReference>
<dbReference type="GO" id="GO:0045892">
    <property type="term" value="P:negative regulation of DNA-templated transcription"/>
    <property type="evidence" value="ECO:0007669"/>
    <property type="project" value="InterPro"/>
</dbReference>
<dbReference type="GO" id="GO:0097355">
    <property type="term" value="P:protein localization to heterochromatin"/>
    <property type="evidence" value="ECO:0000250"/>
    <property type="project" value="UniProtKB"/>
</dbReference>
<dbReference type="CDD" id="cd22896">
    <property type="entry name" value="periphilin-like"/>
    <property type="match status" value="1"/>
</dbReference>
<dbReference type="InterPro" id="IPR028851">
    <property type="entry name" value="Pphln1"/>
</dbReference>
<dbReference type="PANTHER" id="PTHR15836">
    <property type="entry name" value="PERIPHILIN 1"/>
    <property type="match status" value="1"/>
</dbReference>
<dbReference type="PANTHER" id="PTHR15836:SF4">
    <property type="entry name" value="PERIPHILIN-1"/>
    <property type="match status" value="1"/>
</dbReference>
<dbReference type="Pfam" id="PF25234">
    <property type="entry name" value="Periphilin_C"/>
    <property type="match status" value="1"/>
</dbReference>
<evidence type="ECO:0000250" key="1"/>
<evidence type="ECO:0000250" key="2">
    <source>
        <dbReference type="UniProtKB" id="Q8NEY8"/>
    </source>
</evidence>
<evidence type="ECO:0000256" key="3">
    <source>
        <dbReference type="SAM" id="MobiDB-lite"/>
    </source>
</evidence>
<evidence type="ECO:0000269" key="4">
    <source>
    </source>
</evidence>
<evidence type="ECO:0000303" key="5">
    <source>
    </source>
</evidence>
<evidence type="ECO:0000305" key="6"/>
<evidence type="ECO:0000312" key="7">
    <source>
        <dbReference type="MGI" id="MGI:1917029"/>
    </source>
</evidence>
<evidence type="ECO:0007744" key="8">
    <source>
    </source>
</evidence>
<evidence type="ECO:0007744" key="9">
    <source>
    </source>
</evidence>
<feature type="chain" id="PRO_0000058538" description="Periphilin-1">
    <location>
        <begin position="1"/>
        <end position="381"/>
    </location>
</feature>
<feature type="region of interest" description="Disordered" evidence="3">
    <location>
        <begin position="1"/>
        <end position="65"/>
    </location>
</feature>
<feature type="region of interest" description="Disordered" evidence="3">
    <location>
        <begin position="79"/>
        <end position="260"/>
    </location>
</feature>
<feature type="short sequence motif" description="Nuclear localization signal" evidence="1">
    <location>
        <begin position="117"/>
        <end position="123"/>
    </location>
</feature>
<feature type="compositionally biased region" description="Basic and acidic residues" evidence="3">
    <location>
        <begin position="1"/>
        <end position="28"/>
    </location>
</feature>
<feature type="compositionally biased region" description="Basic and acidic residues" evidence="3">
    <location>
        <begin position="39"/>
        <end position="65"/>
    </location>
</feature>
<feature type="compositionally biased region" description="Basic and acidic residues" evidence="3">
    <location>
        <begin position="79"/>
        <end position="121"/>
    </location>
</feature>
<feature type="compositionally biased region" description="Basic and acidic residues" evidence="3">
    <location>
        <begin position="130"/>
        <end position="156"/>
    </location>
</feature>
<feature type="compositionally biased region" description="Low complexity" evidence="3">
    <location>
        <begin position="157"/>
        <end position="168"/>
    </location>
</feature>
<feature type="compositionally biased region" description="Basic residues" evidence="3">
    <location>
        <begin position="175"/>
        <end position="187"/>
    </location>
</feature>
<feature type="compositionally biased region" description="Basic and acidic residues" evidence="3">
    <location>
        <begin position="195"/>
        <end position="208"/>
    </location>
</feature>
<feature type="compositionally biased region" description="Low complexity" evidence="3">
    <location>
        <begin position="217"/>
        <end position="230"/>
    </location>
</feature>
<feature type="compositionally biased region" description="Basic and acidic residues" evidence="3">
    <location>
        <begin position="231"/>
        <end position="260"/>
    </location>
</feature>
<feature type="modified residue" description="Phosphoserine" evidence="2">
    <location>
        <position position="124"/>
    </location>
</feature>
<feature type="modified residue" description="Phosphoserine" evidence="2">
    <location>
        <position position="128"/>
    </location>
</feature>
<feature type="modified residue" description="Phosphoserine" evidence="2">
    <location>
        <position position="147"/>
    </location>
</feature>
<feature type="modified residue" description="Phosphoserine" evidence="2">
    <location>
        <position position="154"/>
    </location>
</feature>
<feature type="modified residue" description="Phosphoserine" evidence="2">
    <location>
        <position position="181"/>
    </location>
</feature>
<feature type="modified residue" description="Phosphoserine" evidence="2">
    <location>
        <position position="211"/>
    </location>
</feature>
<feature type="modified residue" description="Phosphoserine" evidence="2">
    <location>
        <position position="215"/>
    </location>
</feature>
<feature type="modified residue" description="Phosphoserine" evidence="8 9">
    <location>
        <position position="219"/>
    </location>
</feature>
<feature type="modified residue" description="N6-acetyllysine; alternate" evidence="2">
    <location>
        <position position="249"/>
    </location>
</feature>
<feature type="modified residue" description="Phosphoserine" evidence="2">
    <location>
        <position position="339"/>
    </location>
</feature>
<feature type="cross-link" description="Glycyl lysine isopeptide (Lys-Gly) (interchain with G-Cter in SUMO2)" evidence="2">
    <location>
        <position position="123"/>
    </location>
</feature>
<feature type="cross-link" description="Glycyl lysine isopeptide (Lys-Gly) (interchain with G-Cter in SUMO2)" evidence="2">
    <location>
        <position position="194"/>
    </location>
</feature>
<feature type="cross-link" description="Glycyl lysine isopeptide (Lys-Gly) (interchain with G-Cter in SUMO2)" evidence="2">
    <location>
        <position position="213"/>
    </location>
</feature>
<feature type="cross-link" description="Glycyl lysine isopeptide (Lys-Gly) (interchain with G-Cter in SUMO2)" evidence="2">
    <location>
        <position position="241"/>
    </location>
</feature>
<feature type="cross-link" description="Glycyl lysine isopeptide (Lys-Gly) (interchain with G-Cter in SUMO2); alternate" evidence="2">
    <location>
        <position position="249"/>
    </location>
</feature>
<feature type="cross-link" description="Glycyl lysine isopeptide (Lys-Gly) (interchain with G-Cter in SUMO2)" evidence="2">
    <location>
        <position position="342"/>
    </location>
</feature>
<feature type="splice variant" id="VSP_009908" description="In isoform 2." evidence="5">
    <location>
        <begin position="25"/>
        <end position="93"/>
    </location>
</feature>
<feature type="sequence conflict" description="In Ref. 1; BAC38270." evidence="6" ref="1">
    <original>R</original>
    <variation>Q</variation>
    <location>
        <position position="375"/>
    </location>
</feature>